<sequence>MTPTIELICGHRSIRHFTDEPISEAQREAIINSARATSSSSFLQCSSIIRITDKALREELVTLTGGQKHVAQAAEFWVFCADFNRHLQICPDAQLGLAEQLLLGVVDTAMMAQNALIAAESLGLGGVYIGGLRNNIEAVTKLLKLPQHVLPLFGLCLGWPADNPDLKPRLPASILVHENSYQPLDKGALAQYDEQLAEYYLTRGSNNRRDTWSDHIRRTIIKESRPFILDYLHKQGWATR</sequence>
<gene>
    <name type="primary">nfsA</name>
    <name type="synonym">mda18</name>
    <name evidence="3" type="synonym">mdaA</name>
    <name type="synonym">ybjB</name>
    <name type="ordered locus">b0851</name>
    <name type="ordered locus">JW0835</name>
</gene>
<evidence type="ECO:0000269" key="1">
    <source>
    </source>
</evidence>
<evidence type="ECO:0000269" key="2">
    <source>
    </source>
</evidence>
<evidence type="ECO:0000303" key="3">
    <source>
    </source>
</evidence>
<evidence type="ECO:0000305" key="4"/>
<evidence type="ECO:0007744" key="5">
    <source>
        <dbReference type="PDB" id="1F5V"/>
    </source>
</evidence>
<evidence type="ECO:0007829" key="6">
    <source>
        <dbReference type="PDB" id="7Q0O"/>
    </source>
</evidence>
<feature type="chain" id="PRO_0000205510" description="Oxygen-insensitive NADPH nitroreductase">
    <location>
        <begin position="1"/>
        <end position="240"/>
    </location>
</feature>
<feature type="binding site" evidence="1 5">
    <location>
        <begin position="11"/>
        <end position="15"/>
    </location>
    <ligand>
        <name>FMN</name>
        <dbReference type="ChEBI" id="CHEBI:58210"/>
    </ligand>
</feature>
<feature type="binding site" evidence="1 5">
    <location>
        <position position="39"/>
    </location>
    <ligand>
        <name>FMN</name>
        <dbReference type="ChEBI" id="CHEBI:58210"/>
    </ligand>
</feature>
<feature type="binding site" evidence="1 5">
    <location>
        <position position="67"/>
    </location>
    <ligand>
        <name>FMN</name>
        <dbReference type="ChEBI" id="CHEBI:58210"/>
    </ligand>
</feature>
<feature type="binding site" evidence="1 5">
    <location>
        <begin position="128"/>
        <end position="131"/>
    </location>
    <ligand>
        <name>FMN</name>
        <dbReference type="ChEBI" id="CHEBI:58210"/>
    </ligand>
</feature>
<feature type="binding site" evidence="1 5">
    <location>
        <begin position="167"/>
        <end position="169"/>
    </location>
    <ligand>
        <name>FMN</name>
        <dbReference type="ChEBI" id="CHEBI:58210"/>
    </ligand>
</feature>
<feature type="mutagenesis site" description="Strong decrease in activity." evidence="1">
    <original>R</original>
    <variation>A</variation>
    <location>
        <position position="203"/>
    </location>
</feature>
<feature type="mutagenesis site" description="No change in activity." evidence="1">
    <original>R</original>
    <variation>A</variation>
    <location>
        <position position="208"/>
    </location>
</feature>
<feature type="helix" evidence="6">
    <location>
        <begin position="3"/>
        <end position="9"/>
    </location>
</feature>
<feature type="helix" evidence="6">
    <location>
        <begin position="24"/>
        <end position="35"/>
    </location>
</feature>
<feature type="helix" evidence="6">
    <location>
        <begin position="40"/>
        <end position="42"/>
    </location>
</feature>
<feature type="strand" evidence="6">
    <location>
        <begin position="46"/>
        <end position="50"/>
    </location>
</feature>
<feature type="helix" evidence="6">
    <location>
        <begin position="54"/>
        <end position="63"/>
    </location>
</feature>
<feature type="helix" evidence="6">
    <location>
        <begin position="69"/>
        <end position="72"/>
    </location>
</feature>
<feature type="strand" evidence="6">
    <location>
        <begin position="73"/>
        <end position="82"/>
    </location>
</feature>
<feature type="helix" evidence="6">
    <location>
        <begin position="84"/>
        <end position="89"/>
    </location>
</feature>
<feature type="helix" evidence="6">
    <location>
        <begin position="98"/>
        <end position="121"/>
    </location>
</feature>
<feature type="strand" evidence="6">
    <location>
        <begin position="125"/>
        <end position="129"/>
    </location>
</feature>
<feature type="helix" evidence="6">
    <location>
        <begin position="130"/>
        <end position="135"/>
    </location>
</feature>
<feature type="helix" evidence="6">
    <location>
        <begin position="136"/>
        <end position="142"/>
    </location>
</feature>
<feature type="strand" evidence="6">
    <location>
        <begin position="149"/>
        <end position="158"/>
    </location>
</feature>
<feature type="helix" evidence="6">
    <location>
        <begin position="172"/>
        <end position="175"/>
    </location>
</feature>
<feature type="strand" evidence="6">
    <location>
        <begin position="178"/>
        <end position="180"/>
    </location>
</feature>
<feature type="helix" evidence="6">
    <location>
        <begin position="186"/>
        <end position="201"/>
    </location>
</feature>
<feature type="strand" evidence="6">
    <location>
        <begin position="204"/>
        <end position="206"/>
    </location>
</feature>
<feature type="helix" evidence="6">
    <location>
        <begin position="212"/>
        <end position="220"/>
    </location>
</feature>
<feature type="helix" evidence="6">
    <location>
        <begin position="228"/>
        <end position="234"/>
    </location>
</feature>
<organism>
    <name type="scientific">Escherichia coli (strain K12)</name>
    <dbReference type="NCBI Taxonomy" id="83333"/>
    <lineage>
        <taxon>Bacteria</taxon>
        <taxon>Pseudomonadati</taxon>
        <taxon>Pseudomonadota</taxon>
        <taxon>Gammaproteobacteria</taxon>
        <taxon>Enterobacterales</taxon>
        <taxon>Enterobacteriaceae</taxon>
        <taxon>Escherichia</taxon>
    </lineage>
</organism>
<comment type="function">
    <text evidence="2">Catalyzes the reduction of nitroaromatic compounds using NADPH. Has a broad electron acceptor specificity. Reduces nitrofurazone by a ping-pong bi-bi mechanism possibly to generate a two-electron transfer product. Major oxygen-insensitive nitroreductase in E.coli.</text>
</comment>
<comment type="cofactor">
    <cofactor evidence="1 2">
        <name>FMN</name>
        <dbReference type="ChEBI" id="CHEBI:58210"/>
    </cofactor>
    <text evidence="1">Binds 1 FMN per monomer.</text>
</comment>
<comment type="biophysicochemical properties">
    <kinetics>
        <KM evidence="2">11 uM for NADPH</KM>
        <KM evidence="2">5.5 uM for nitrofurazone</KM>
    </kinetics>
</comment>
<comment type="subunit">
    <text evidence="1">Homodimer.</text>
</comment>
<comment type="interaction">
    <interactant intactId="EBI-1120624">
        <id>P17117</id>
    </interactant>
    <interactant intactId="EBI-549153">
        <id>P28630</id>
        <label>holA</label>
    </interactant>
    <organismsDiffer>false</organismsDiffer>
    <experiments>3</experiments>
</comment>
<comment type="similarity">
    <text evidence="4">Belongs to the flavin oxidoreductase frp family.</text>
</comment>
<comment type="sequence caution" evidence="4">
    <conflict type="frameshift">
        <sequence resource="EMBL-CDS" id="CAA33867"/>
    </conflict>
</comment>
<dbReference type="EC" id="1.-.-.-" evidence="2"/>
<dbReference type="EMBL" id="U18655">
    <property type="protein sequence ID" value="AAC43450.1"/>
    <property type="molecule type" value="Genomic_DNA"/>
</dbReference>
<dbReference type="EMBL" id="D38308">
    <property type="protein sequence ID" value="BAA07425.1"/>
    <property type="molecule type" value="Genomic_DNA"/>
</dbReference>
<dbReference type="EMBL" id="U00096">
    <property type="protein sequence ID" value="AAC73938.1"/>
    <property type="molecule type" value="Genomic_DNA"/>
</dbReference>
<dbReference type="EMBL" id="AP009048">
    <property type="protein sequence ID" value="BAA35562.1"/>
    <property type="molecule type" value="Genomic_DNA"/>
</dbReference>
<dbReference type="EMBL" id="X15859">
    <property type="protein sequence ID" value="CAA33867.1"/>
    <property type="status" value="ALT_FRAME"/>
    <property type="molecule type" value="Genomic_DNA"/>
</dbReference>
<dbReference type="PIR" id="I80318">
    <property type="entry name" value="I80318"/>
</dbReference>
<dbReference type="RefSeq" id="NP_415372.1">
    <property type="nucleotide sequence ID" value="NC_000913.3"/>
</dbReference>
<dbReference type="RefSeq" id="WP_000189159.1">
    <property type="nucleotide sequence ID" value="NZ_LN832404.1"/>
</dbReference>
<dbReference type="PDB" id="1F5V">
    <property type="method" value="X-ray"/>
    <property type="resolution" value="1.70 A"/>
    <property type="chains" value="A/B=1-240"/>
</dbReference>
<dbReference type="PDB" id="7NB9">
    <property type="method" value="X-ray"/>
    <property type="resolution" value="1.09 A"/>
    <property type="chains" value="A=1-240"/>
</dbReference>
<dbReference type="PDB" id="7NIY">
    <property type="method" value="X-ray"/>
    <property type="resolution" value="1.03 A"/>
    <property type="chains" value="A=1-240"/>
</dbReference>
<dbReference type="PDB" id="7NMP">
    <property type="method" value="X-ray"/>
    <property type="resolution" value="1.25 A"/>
    <property type="chains" value="A=1-240"/>
</dbReference>
<dbReference type="PDB" id="7NNX">
    <property type="method" value="X-ray"/>
    <property type="resolution" value="1.70 A"/>
    <property type="chains" value="A=1-240"/>
</dbReference>
<dbReference type="PDB" id="7Q0O">
    <property type="method" value="X-ray"/>
    <property type="resolution" value="0.96 A"/>
    <property type="chains" value="A=1-240"/>
</dbReference>
<dbReference type="PDB" id="7Z0W">
    <property type="method" value="X-ray"/>
    <property type="resolution" value="2.06 A"/>
    <property type="chains" value="A/B/C/D/E/F/G/H=1-240"/>
</dbReference>
<dbReference type="PDB" id="8AJX">
    <property type="method" value="X-ray"/>
    <property type="resolution" value="1.25 A"/>
    <property type="chains" value="A=1-240"/>
</dbReference>
<dbReference type="PDBsum" id="1F5V"/>
<dbReference type="PDBsum" id="7NB9"/>
<dbReference type="PDBsum" id="7NIY"/>
<dbReference type="PDBsum" id="7NMP"/>
<dbReference type="PDBsum" id="7NNX"/>
<dbReference type="PDBsum" id="7Q0O"/>
<dbReference type="PDBsum" id="7Z0W"/>
<dbReference type="PDBsum" id="8AJX"/>
<dbReference type="SMR" id="P17117"/>
<dbReference type="BioGRID" id="4259991">
    <property type="interactions" value="29"/>
</dbReference>
<dbReference type="BioGRID" id="849857">
    <property type="interactions" value="4"/>
</dbReference>
<dbReference type="DIP" id="DIP-10334N"/>
<dbReference type="FunCoup" id="P17117">
    <property type="interactions" value="76"/>
</dbReference>
<dbReference type="IntAct" id="P17117">
    <property type="interactions" value="5"/>
</dbReference>
<dbReference type="STRING" id="511145.b0851"/>
<dbReference type="DrugBank" id="DB03247">
    <property type="generic name" value="Flavin mononucleotide"/>
</dbReference>
<dbReference type="DrugBank" id="DB00698">
    <property type="generic name" value="Nitrofurantoin"/>
</dbReference>
<dbReference type="jPOST" id="P17117"/>
<dbReference type="PaxDb" id="511145-b0851"/>
<dbReference type="EnsemblBacteria" id="AAC73938">
    <property type="protein sequence ID" value="AAC73938"/>
    <property type="gene ID" value="b0851"/>
</dbReference>
<dbReference type="GeneID" id="945483"/>
<dbReference type="KEGG" id="ecj:JW0835"/>
<dbReference type="KEGG" id="eco:b0851"/>
<dbReference type="KEGG" id="ecoc:C3026_05310"/>
<dbReference type="PATRIC" id="fig|1411691.4.peg.1427"/>
<dbReference type="EchoBASE" id="EB1241"/>
<dbReference type="eggNOG" id="COG0778">
    <property type="taxonomic scope" value="Bacteria"/>
</dbReference>
<dbReference type="HOGENOM" id="CLU_070764_0_2_6"/>
<dbReference type="InParanoid" id="P17117"/>
<dbReference type="OMA" id="AHFNQPM"/>
<dbReference type="OrthoDB" id="3181400at2"/>
<dbReference type="PhylomeDB" id="P17117"/>
<dbReference type="BioCyc" id="EcoCyc:EG11261-MONOMER"/>
<dbReference type="BioCyc" id="MetaCyc:EG11261-MONOMER"/>
<dbReference type="BRENDA" id="1.7.1.B3">
    <property type="organism ID" value="2026"/>
</dbReference>
<dbReference type="SABIO-RK" id="P17117"/>
<dbReference type="EvolutionaryTrace" id="P17117"/>
<dbReference type="PRO" id="PR:P17117"/>
<dbReference type="Proteomes" id="UP000000625">
    <property type="component" value="Chromosome"/>
</dbReference>
<dbReference type="GO" id="GO:0005829">
    <property type="term" value="C:cytosol"/>
    <property type="evidence" value="ECO:0000314"/>
    <property type="project" value="EcoCyc"/>
</dbReference>
<dbReference type="GO" id="GO:0010181">
    <property type="term" value="F:FMN binding"/>
    <property type="evidence" value="ECO:0000314"/>
    <property type="project" value="EcoCyc"/>
</dbReference>
<dbReference type="GO" id="GO:0003955">
    <property type="term" value="F:NAD(P)H dehydrogenase (quinone) activity"/>
    <property type="evidence" value="ECO:0000314"/>
    <property type="project" value="EcoCyc"/>
</dbReference>
<dbReference type="GO" id="GO:0042803">
    <property type="term" value="F:protein homodimerization activity"/>
    <property type="evidence" value="ECO:0000314"/>
    <property type="project" value="EcoCyc"/>
</dbReference>
<dbReference type="CDD" id="cd02146">
    <property type="entry name" value="NfsA-like"/>
    <property type="match status" value="1"/>
</dbReference>
<dbReference type="FunFam" id="3.40.109.10:FF:000006">
    <property type="entry name" value="Oxygen-insensitive NADPH nitroreductase"/>
    <property type="match status" value="1"/>
</dbReference>
<dbReference type="Gene3D" id="3.40.109.10">
    <property type="entry name" value="NADH Oxidase"/>
    <property type="match status" value="1"/>
</dbReference>
<dbReference type="InterPro" id="IPR016446">
    <property type="entry name" value="Flavin_OxRdtase_Frp"/>
</dbReference>
<dbReference type="InterPro" id="IPR029479">
    <property type="entry name" value="Nitroreductase"/>
</dbReference>
<dbReference type="InterPro" id="IPR000415">
    <property type="entry name" value="Nitroreductase-like"/>
</dbReference>
<dbReference type="NCBIfam" id="NF008033">
    <property type="entry name" value="PRK10765.1"/>
    <property type="match status" value="1"/>
</dbReference>
<dbReference type="PANTHER" id="PTHR43425">
    <property type="entry name" value="OXYGEN-INSENSITIVE NADPH NITROREDUCTASE"/>
    <property type="match status" value="1"/>
</dbReference>
<dbReference type="PANTHER" id="PTHR43425:SF2">
    <property type="entry name" value="OXYGEN-INSENSITIVE NADPH NITROREDUCTASE"/>
    <property type="match status" value="1"/>
</dbReference>
<dbReference type="Pfam" id="PF00881">
    <property type="entry name" value="Nitroreductase"/>
    <property type="match status" value="1"/>
</dbReference>
<dbReference type="PIRSF" id="PIRSF005426">
    <property type="entry name" value="Frp"/>
    <property type="match status" value="1"/>
</dbReference>
<dbReference type="SUPFAM" id="SSF55469">
    <property type="entry name" value="FMN-dependent nitroreductase-like"/>
    <property type="match status" value="1"/>
</dbReference>
<name>NFSA_ECOLI</name>
<reference key="1">
    <citation type="journal article" date="1995" name="Proc. Natl. Acad. Sci. U.S.A.">
        <title>A general genetic approach in Escherichia coli for determining the mechanism(s) of action of tumoricidal agents: application to DMP 840, a tumoricidal agent.</title>
        <authorList>
            <person name="Chatterjee P.K."/>
            <person name="Sternberg N.L."/>
        </authorList>
    </citation>
    <scope>NUCLEOTIDE SEQUENCE [GENOMIC DNA]</scope>
</reference>
<reference key="2">
    <citation type="journal article" date="1996" name="J. Bacteriol.">
        <title>Biochemical characterization of NfsA, the Escherichia coli major nitroreductase exhibiting a high amino acid sequence homology to Frp, a Vibrio harveyi flavin oxidoreductase.</title>
        <authorList>
            <person name="Zenno S."/>
            <person name="Koike H."/>
            <person name="Kumar A.N."/>
            <person name="Jayaraman R."/>
            <person name="Tanokura M."/>
            <person name="Saigo K."/>
        </authorList>
    </citation>
    <scope>NUCLEOTIDE SEQUENCE [GENOMIC DNA]</scope>
    <scope>FUNCTION</scope>
    <scope>CATALYTIC ACTIVITY</scope>
    <scope>COFACTOR</scope>
    <scope>BIOPHYSICOCHEMICAL PROPERTIES</scope>
    <source>
        <strain>K12 / AB1157</strain>
    </source>
</reference>
<reference key="3">
    <citation type="journal article" date="1996" name="DNA Res.">
        <title>A 718-kb DNA sequence of the Escherichia coli K-12 genome corresponding to the 12.7-28.0 min region on the linkage map.</title>
        <authorList>
            <person name="Oshima T."/>
            <person name="Aiba H."/>
            <person name="Baba T."/>
            <person name="Fujita K."/>
            <person name="Hayashi K."/>
            <person name="Honjo A."/>
            <person name="Ikemoto K."/>
            <person name="Inada T."/>
            <person name="Itoh T."/>
            <person name="Kajihara M."/>
            <person name="Kanai K."/>
            <person name="Kashimoto K."/>
            <person name="Kimura S."/>
            <person name="Kitagawa M."/>
            <person name="Makino K."/>
            <person name="Masuda S."/>
            <person name="Miki T."/>
            <person name="Mizobuchi K."/>
            <person name="Mori H."/>
            <person name="Motomura K."/>
            <person name="Nakamura Y."/>
            <person name="Nashimoto H."/>
            <person name="Nishio Y."/>
            <person name="Saito N."/>
            <person name="Sampei G."/>
            <person name="Seki Y."/>
            <person name="Tagami H."/>
            <person name="Takemoto K."/>
            <person name="Wada C."/>
            <person name="Yamamoto Y."/>
            <person name="Yano M."/>
            <person name="Horiuchi T."/>
        </authorList>
    </citation>
    <scope>NUCLEOTIDE SEQUENCE [LARGE SCALE GENOMIC DNA]</scope>
    <source>
        <strain>K12 / W3110 / ATCC 27325 / DSM 5911</strain>
    </source>
</reference>
<reference key="4">
    <citation type="journal article" date="1997" name="Science">
        <title>The complete genome sequence of Escherichia coli K-12.</title>
        <authorList>
            <person name="Blattner F.R."/>
            <person name="Plunkett G. III"/>
            <person name="Bloch C.A."/>
            <person name="Perna N.T."/>
            <person name="Burland V."/>
            <person name="Riley M."/>
            <person name="Collado-Vides J."/>
            <person name="Glasner J.D."/>
            <person name="Rode C.K."/>
            <person name="Mayhew G.F."/>
            <person name="Gregor J."/>
            <person name="Davis N.W."/>
            <person name="Kirkpatrick H.A."/>
            <person name="Goeden M.A."/>
            <person name="Rose D.J."/>
            <person name="Mau B."/>
            <person name="Shao Y."/>
        </authorList>
    </citation>
    <scope>NUCLEOTIDE SEQUENCE [LARGE SCALE GENOMIC DNA]</scope>
    <source>
        <strain>K12 / MG1655 / ATCC 47076</strain>
    </source>
</reference>
<reference key="5">
    <citation type="journal article" date="2006" name="Mol. Syst. Biol.">
        <title>Highly accurate genome sequences of Escherichia coli K-12 strains MG1655 and W3110.</title>
        <authorList>
            <person name="Hayashi K."/>
            <person name="Morooka N."/>
            <person name="Yamamoto Y."/>
            <person name="Fujita K."/>
            <person name="Isono K."/>
            <person name="Choi S."/>
            <person name="Ohtsubo E."/>
            <person name="Baba T."/>
            <person name="Wanner B.L."/>
            <person name="Mori H."/>
            <person name="Horiuchi T."/>
        </authorList>
    </citation>
    <scope>NUCLEOTIDE SEQUENCE [LARGE SCALE GENOMIC DNA]</scope>
    <source>
        <strain>K12 / W3110 / ATCC 27325 / DSM 5911</strain>
    </source>
</reference>
<reference key="6">
    <citation type="journal article" date="1989" name="Mol. Gen. Genet.">
        <title>Characterization of the gene rimK responsible for the addition of glutamic acid residues to the C-terminus of ribosomal protein S6 in Escherichia coli K12.</title>
        <authorList>
            <person name="Kang W.-K."/>
            <person name="Icho T."/>
            <person name="Isono S."/>
            <person name="Kitakawa M."/>
            <person name="Isono K."/>
        </authorList>
    </citation>
    <scope>PRELIMINARY NUCLEOTIDE SEQUENCE [GENOMIC DNA] OF 134-240</scope>
    <source>
        <strain>K12</strain>
    </source>
</reference>
<reference key="7">
    <citation type="journal article" date="1998" name="J. Bacteriol.">
        <title>Conversion of NfsA, the major Escherichia coli nitroreductase, to a flavin reductase with an activity similar to that of Frp, a flavin reductase in Vibrio harveyi, by a single amino acid substitution.</title>
        <authorList>
            <person name="Zenno S."/>
            <person name="Kobori T."/>
            <person name="Tanokura M."/>
            <person name="Saigo K."/>
        </authorList>
    </citation>
    <scope>MUTAGENESIS</scope>
</reference>
<reference key="8">
    <citation type="journal article" date="2001" name="J. Biol. Chem.">
        <title>Structure and site-directed mutagenesis of a flavoprotein from Escherichia coli that reduces nitrocompounds: alteration of pyridine nucleotide binding by a single amino acid substitution.</title>
        <authorList>
            <person name="Kobori T."/>
            <person name="Sasaki H."/>
            <person name="Lee W.C."/>
            <person name="Zenno S."/>
            <person name="Saigo K."/>
            <person name="Murphy M.E."/>
            <person name="Tanokura M."/>
        </authorList>
    </citation>
    <scope>X-RAY CRYSTALLOGRAPHY (1.7 ANGSTROMS) IN COMPLEX WITH FMN</scope>
    <scope>COFACTOR</scope>
    <scope>SUBUNIT</scope>
    <scope>MUTAGENESIS OF ARG-203 AND ARG-208</scope>
</reference>
<keyword id="KW-0002">3D-structure</keyword>
<keyword id="KW-0285">Flavoprotein</keyword>
<keyword id="KW-0288">FMN</keyword>
<keyword id="KW-0521">NADP</keyword>
<keyword id="KW-0560">Oxidoreductase</keyword>
<keyword id="KW-1185">Reference proteome</keyword>
<proteinExistence type="evidence at protein level"/>
<protein>
    <recommendedName>
        <fullName evidence="4">Oxygen-insensitive NADPH nitroreductase</fullName>
        <ecNumber evidence="2">1.-.-.-</ecNumber>
    </recommendedName>
    <alternativeName>
        <fullName>Modulator of drug activity A</fullName>
    </alternativeName>
</protein>
<accession>P17117</accession>